<keyword id="KW-0027">Amidation</keyword>
<keyword id="KW-0878">Amphibian defense peptide</keyword>
<keyword id="KW-0929">Antimicrobial</keyword>
<keyword id="KW-0903">Direct protein sequencing</keyword>
<keyword id="KW-0964">Secreted</keyword>
<gene>
    <name type="primary">psn13</name>
    <name type="synonym">psn-13</name>
</gene>
<sequence>FLSLIPHAINAVGVHAKHF</sequence>
<proteinExistence type="evidence at protein level"/>
<evidence type="ECO:0000250" key="1">
    <source>
        <dbReference type="UniProtKB" id="P84566"/>
    </source>
</evidence>
<evidence type="ECO:0000255" key="2"/>
<evidence type="ECO:0000269" key="3">
    <source>
    </source>
</evidence>
<evidence type="ECO:0000303" key="4">
    <source>
    </source>
</evidence>
<evidence type="ECO:0000305" key="5"/>
<dbReference type="GO" id="GO:0005576">
    <property type="term" value="C:extracellular region"/>
    <property type="evidence" value="ECO:0007669"/>
    <property type="project" value="UniProtKB-SubCell"/>
</dbReference>
<dbReference type="GO" id="GO:0006952">
    <property type="term" value="P:defense response"/>
    <property type="evidence" value="ECO:0007669"/>
    <property type="project" value="UniProtKB-KW"/>
</dbReference>
<name>PLS5_PITAZ</name>
<reference evidence="5" key="1">
    <citation type="journal article" date="2007" name="Peptides">
        <title>A combined mass spectrometric and cDNA sequencing approach to the isolation and characterization of novel antimicrobial peptides from the skin secretions of Phyllomedusa hypochondrialis azurea.</title>
        <authorList>
            <person name="Thompson A.H."/>
            <person name="Bjourson A.J."/>
            <person name="Orr D.F."/>
            <person name="Shaw C."/>
            <person name="McClean S."/>
        </authorList>
    </citation>
    <scope>PROTEIN SEQUENCE</scope>
    <scope>SUBCELLULAR LOCATION</scope>
    <scope>TISSUE SPECIFICITY</scope>
    <scope>MASS SPECTROMETRY</scope>
    <scope>AMIDATION AT PHE-19</scope>
    <source>
        <tissue evidence="3">Skin secretion</tissue>
    </source>
</reference>
<feature type="peptide" id="PRO_0000250574" description="Phylloseptin-Az5" evidence="3">
    <location>
        <begin position="1"/>
        <end position="19"/>
    </location>
</feature>
<feature type="modified residue" description="Phenylalanine amide" evidence="3">
    <location>
        <position position="19"/>
    </location>
</feature>
<feature type="unsure residue" description="I or L" evidence="3">
    <location>
        <position position="5"/>
    </location>
</feature>
<feature type="unsure residue" description="I or L" evidence="3">
    <location>
        <position position="9"/>
    </location>
</feature>
<protein>
    <recommendedName>
        <fullName evidence="5">Phylloseptin-Az5</fullName>
        <shortName evidence="5">PLS-Az5</shortName>
    </recommendedName>
    <alternativeName>
        <fullName evidence="4">Phylloseptin-13</fullName>
        <shortName evidence="4">PS-13</shortName>
    </alternativeName>
</protein>
<accession>P84938</accession>
<organism>
    <name type="scientific">Pithecopus azureus</name>
    <name type="common">Orange-legged monkey tree frog</name>
    <name type="synonym">Phyllomedusa azurea</name>
    <dbReference type="NCBI Taxonomy" id="2034991"/>
    <lineage>
        <taxon>Eukaryota</taxon>
        <taxon>Metazoa</taxon>
        <taxon>Chordata</taxon>
        <taxon>Craniata</taxon>
        <taxon>Vertebrata</taxon>
        <taxon>Euteleostomi</taxon>
        <taxon>Amphibia</taxon>
        <taxon>Batrachia</taxon>
        <taxon>Anura</taxon>
        <taxon>Neobatrachia</taxon>
        <taxon>Hyloidea</taxon>
        <taxon>Hylidae</taxon>
        <taxon>Phyllomedusinae</taxon>
        <taxon>Pithecopus</taxon>
    </lineage>
</organism>
<comment type="function">
    <text evidence="1">Has antimicrobial activity.</text>
</comment>
<comment type="subcellular location">
    <subcellularLocation>
        <location evidence="3">Secreted</location>
    </subcellularLocation>
</comment>
<comment type="tissue specificity">
    <text evidence="3">Expressed by the skin glands.</text>
</comment>
<comment type="mass spectrometry"/>
<comment type="similarity">
    <text evidence="2">Belongs to the frog skin active peptide (FSAP) family. Phylloseptin subfamily.</text>
</comment>